<reference key="1">
    <citation type="journal article" date="2010" name="Genome Biol. Evol.">
        <title>Continuing evolution of Burkholderia mallei through genome reduction and large-scale rearrangements.</title>
        <authorList>
            <person name="Losada L."/>
            <person name="Ronning C.M."/>
            <person name="DeShazer D."/>
            <person name="Woods D."/>
            <person name="Fedorova N."/>
            <person name="Kim H.S."/>
            <person name="Shabalina S.A."/>
            <person name="Pearson T.R."/>
            <person name="Brinkac L."/>
            <person name="Tan P."/>
            <person name="Nandi T."/>
            <person name="Crabtree J."/>
            <person name="Badger J."/>
            <person name="Beckstrom-Sternberg S."/>
            <person name="Saqib M."/>
            <person name="Schutzer S.E."/>
            <person name="Keim P."/>
            <person name="Nierman W.C."/>
        </authorList>
    </citation>
    <scope>NUCLEOTIDE SEQUENCE [LARGE SCALE GENOMIC DNA]</scope>
    <source>
        <strain>1106a</strain>
    </source>
</reference>
<feature type="chain" id="PRO_0000340438" description="Urease accessory protein UreD">
    <location>
        <begin position="1"/>
        <end position="291"/>
    </location>
</feature>
<comment type="function">
    <text evidence="1">Required for maturation of urease via the functional incorporation of the urease nickel metallocenter.</text>
</comment>
<comment type="subunit">
    <text evidence="1">UreD, UreF and UreG form a complex that acts as a GTP-hydrolysis-dependent molecular chaperone, activating the urease apoprotein by helping to assemble the nickel containing metallocenter of UreC. The UreE protein probably delivers the nickel.</text>
</comment>
<comment type="subcellular location">
    <subcellularLocation>
        <location evidence="1">Cytoplasm</location>
    </subcellularLocation>
</comment>
<comment type="similarity">
    <text evidence="1">Belongs to the UreD family.</text>
</comment>
<proteinExistence type="inferred from homology"/>
<evidence type="ECO:0000255" key="1">
    <source>
        <dbReference type="HAMAP-Rule" id="MF_01384"/>
    </source>
</evidence>
<organism>
    <name type="scientific">Burkholderia pseudomallei (strain 1106a)</name>
    <dbReference type="NCBI Taxonomy" id="357348"/>
    <lineage>
        <taxon>Bacteria</taxon>
        <taxon>Pseudomonadati</taxon>
        <taxon>Pseudomonadota</taxon>
        <taxon>Betaproteobacteria</taxon>
        <taxon>Burkholderiales</taxon>
        <taxon>Burkholderiaceae</taxon>
        <taxon>Burkholderia</taxon>
        <taxon>pseudomallei group</taxon>
    </lineage>
</organism>
<dbReference type="EMBL" id="CP000572">
    <property type="protein sequence ID" value="ABN92610.1"/>
    <property type="molecule type" value="Genomic_DNA"/>
</dbReference>
<dbReference type="RefSeq" id="WP_004185533.1">
    <property type="nucleotide sequence ID" value="NC_009076.1"/>
</dbReference>
<dbReference type="SMR" id="A3NYC5"/>
<dbReference type="KEGG" id="bpl:BURPS1106A_3108"/>
<dbReference type="HOGENOM" id="CLU_056339_0_0_4"/>
<dbReference type="Proteomes" id="UP000006738">
    <property type="component" value="Chromosome I"/>
</dbReference>
<dbReference type="GO" id="GO:0005737">
    <property type="term" value="C:cytoplasm"/>
    <property type="evidence" value="ECO:0007669"/>
    <property type="project" value="UniProtKB-SubCell"/>
</dbReference>
<dbReference type="GO" id="GO:0016151">
    <property type="term" value="F:nickel cation binding"/>
    <property type="evidence" value="ECO:0007669"/>
    <property type="project" value="UniProtKB-UniRule"/>
</dbReference>
<dbReference type="HAMAP" id="MF_01384">
    <property type="entry name" value="UreD"/>
    <property type="match status" value="1"/>
</dbReference>
<dbReference type="InterPro" id="IPR002669">
    <property type="entry name" value="UreD"/>
</dbReference>
<dbReference type="PANTHER" id="PTHR33643">
    <property type="entry name" value="UREASE ACCESSORY PROTEIN D"/>
    <property type="match status" value="1"/>
</dbReference>
<dbReference type="PANTHER" id="PTHR33643:SF1">
    <property type="entry name" value="UREASE ACCESSORY PROTEIN D"/>
    <property type="match status" value="1"/>
</dbReference>
<dbReference type="Pfam" id="PF01774">
    <property type="entry name" value="UreD"/>
    <property type="match status" value="1"/>
</dbReference>
<accession>A3NYC5</accession>
<gene>
    <name evidence="1" type="primary">ureD</name>
    <name type="ordered locus">BURPS1106A_3108</name>
</gene>
<name>URED_BURP0</name>
<keyword id="KW-0143">Chaperone</keyword>
<keyword id="KW-0963">Cytoplasm</keyword>
<keyword id="KW-0996">Nickel insertion</keyword>
<sequence length="291" mass="30980">MSAHEPHTSLVRPAAKAWHARLELGFERQPGGRTALAHRRHVGPLRVQRALYPEGDAICHAVIVHPPGGVAGGDRLEIDVRLDAGTHAVLTTPGATKWYKSNGLDARQRIDIDVGAHAKLDWLPQNNLFFDAAHASLEFVLALGDGASVLGWDATQLGRQAAGEAWSAGSIASFSKIVGPSGRPLWVERARLDAGDPLRAAPQGLGGFAVYGTLWALGAACTEALAESIAPALPFDDALRAGVTCVAPGTLLIRALAHSMEALQRLLAEQWLALRPIVHGVDPKPLRLWQT</sequence>
<protein>
    <recommendedName>
        <fullName evidence="1">Urease accessory protein UreD</fullName>
    </recommendedName>
</protein>